<organism>
    <name type="scientific">Mycobacterium tuberculosis (strain CDC 1551 / Oshkosh)</name>
    <dbReference type="NCBI Taxonomy" id="83331"/>
    <lineage>
        <taxon>Bacteria</taxon>
        <taxon>Bacillati</taxon>
        <taxon>Actinomycetota</taxon>
        <taxon>Actinomycetes</taxon>
        <taxon>Mycobacteriales</taxon>
        <taxon>Mycobacteriaceae</taxon>
        <taxon>Mycobacterium</taxon>
        <taxon>Mycobacterium tuberculosis complex</taxon>
    </lineage>
</organism>
<gene>
    <name type="ordered locus">MT1596.1</name>
</gene>
<proteinExistence type="predicted"/>
<sequence>MPNGVLGLGNPSRLAALYGLQLAHESQCCQMHNLPSAARQVTVACREEVGITTILAGRDECGVCDKTAGLDGAAP</sequence>
<protein>
    <recommendedName>
        <fullName>Uncharacterized protein MT1596.1</fullName>
    </recommendedName>
</protein>
<keyword id="KW-1185">Reference proteome</keyword>
<dbReference type="EMBL" id="AE000516">
    <property type="protein sequence ID" value="AAK45863.1"/>
    <property type="molecule type" value="Genomic_DNA"/>
</dbReference>
<dbReference type="PIR" id="F70761">
    <property type="entry name" value="F70761"/>
</dbReference>
<dbReference type="RefSeq" id="WP_003901194.1">
    <property type="nucleotide sequence ID" value="NZ_KK341227.1"/>
</dbReference>
<dbReference type="KEGG" id="mtc:MT1596.1"/>
<dbReference type="HOGENOM" id="CLU_2735783_0_0_11"/>
<dbReference type="Proteomes" id="UP000001020">
    <property type="component" value="Chromosome"/>
</dbReference>
<reference key="1">
    <citation type="journal article" date="2002" name="J. Bacteriol.">
        <title>Whole-genome comparison of Mycobacterium tuberculosis clinical and laboratory strains.</title>
        <authorList>
            <person name="Fleischmann R.D."/>
            <person name="Alland D."/>
            <person name="Eisen J.A."/>
            <person name="Carpenter L."/>
            <person name="White O."/>
            <person name="Peterson J.D."/>
            <person name="DeBoy R.T."/>
            <person name="Dodson R.J."/>
            <person name="Gwinn M.L."/>
            <person name="Haft D.H."/>
            <person name="Hickey E.K."/>
            <person name="Kolonay J.F."/>
            <person name="Nelson W.C."/>
            <person name="Umayam L.A."/>
            <person name="Ermolaeva M.D."/>
            <person name="Salzberg S.L."/>
            <person name="Delcher A."/>
            <person name="Utterback T.R."/>
            <person name="Weidman J.F."/>
            <person name="Khouri H.M."/>
            <person name="Gill J."/>
            <person name="Mikula A."/>
            <person name="Bishai W."/>
            <person name="Jacobs W.R. Jr."/>
            <person name="Venter J.C."/>
            <person name="Fraser C.M."/>
        </authorList>
    </citation>
    <scope>NUCLEOTIDE SEQUENCE [LARGE SCALE GENOMIC DNA]</scope>
    <source>
        <strain>CDC 1551 / Oshkosh</strain>
    </source>
</reference>
<feature type="chain" id="PRO_0000427416" description="Uncharacterized protein MT1596.1">
    <location>
        <begin position="1"/>
        <end position="75"/>
    </location>
</feature>
<accession>P9WLU8</accession>
<accession>L0T9R4</accession>
<accession>P64871</accession>
<accession>Q10781</accession>
<name>Y1545_MYCTO</name>